<evidence type="ECO:0000255" key="1">
    <source>
        <dbReference type="HAMAP-Rule" id="MF_00394"/>
    </source>
</evidence>
<feature type="chain" id="PRO_0000138041" description="Glycerol-3-phosphate dehydrogenase [NAD(P)+]">
    <location>
        <begin position="1"/>
        <end position="338"/>
    </location>
</feature>
<feature type="active site" description="Proton acceptor" evidence="1">
    <location>
        <position position="194"/>
    </location>
</feature>
<feature type="binding site" evidence="1">
    <location>
        <position position="13"/>
    </location>
    <ligand>
        <name>NADPH</name>
        <dbReference type="ChEBI" id="CHEBI:57783"/>
    </ligand>
</feature>
<feature type="binding site" evidence="1">
    <location>
        <position position="14"/>
    </location>
    <ligand>
        <name>NADPH</name>
        <dbReference type="ChEBI" id="CHEBI:57783"/>
    </ligand>
</feature>
<feature type="binding site" evidence="1">
    <location>
        <position position="108"/>
    </location>
    <ligand>
        <name>NADPH</name>
        <dbReference type="ChEBI" id="CHEBI:57783"/>
    </ligand>
</feature>
<feature type="binding site" evidence="1">
    <location>
        <position position="108"/>
    </location>
    <ligand>
        <name>sn-glycerol 3-phosphate</name>
        <dbReference type="ChEBI" id="CHEBI:57597"/>
    </ligand>
</feature>
<feature type="binding site" evidence="1">
    <location>
        <position position="139"/>
    </location>
    <ligand>
        <name>sn-glycerol 3-phosphate</name>
        <dbReference type="ChEBI" id="CHEBI:57597"/>
    </ligand>
</feature>
<feature type="binding site" evidence="1">
    <location>
        <position position="141"/>
    </location>
    <ligand>
        <name>sn-glycerol 3-phosphate</name>
        <dbReference type="ChEBI" id="CHEBI:57597"/>
    </ligand>
</feature>
<feature type="binding site" evidence="1">
    <location>
        <position position="143"/>
    </location>
    <ligand>
        <name>NADPH</name>
        <dbReference type="ChEBI" id="CHEBI:57783"/>
    </ligand>
</feature>
<feature type="binding site" evidence="1">
    <location>
        <position position="194"/>
    </location>
    <ligand>
        <name>sn-glycerol 3-phosphate</name>
        <dbReference type="ChEBI" id="CHEBI:57597"/>
    </ligand>
</feature>
<feature type="binding site" evidence="1">
    <location>
        <position position="247"/>
    </location>
    <ligand>
        <name>sn-glycerol 3-phosphate</name>
        <dbReference type="ChEBI" id="CHEBI:57597"/>
    </ligand>
</feature>
<feature type="binding site" evidence="1">
    <location>
        <position position="257"/>
    </location>
    <ligand>
        <name>sn-glycerol 3-phosphate</name>
        <dbReference type="ChEBI" id="CHEBI:57597"/>
    </ligand>
</feature>
<feature type="binding site" evidence="1">
    <location>
        <position position="258"/>
    </location>
    <ligand>
        <name>NADPH</name>
        <dbReference type="ChEBI" id="CHEBI:57783"/>
    </ligand>
</feature>
<feature type="binding site" evidence="1">
    <location>
        <position position="258"/>
    </location>
    <ligand>
        <name>sn-glycerol 3-phosphate</name>
        <dbReference type="ChEBI" id="CHEBI:57597"/>
    </ligand>
</feature>
<feature type="binding site" evidence="1">
    <location>
        <position position="259"/>
    </location>
    <ligand>
        <name>sn-glycerol 3-phosphate</name>
        <dbReference type="ChEBI" id="CHEBI:57597"/>
    </ligand>
</feature>
<feature type="binding site" evidence="1">
    <location>
        <position position="282"/>
    </location>
    <ligand>
        <name>NADPH</name>
        <dbReference type="ChEBI" id="CHEBI:57783"/>
    </ligand>
</feature>
<feature type="binding site" evidence="1">
    <location>
        <position position="284"/>
    </location>
    <ligand>
        <name>NADPH</name>
        <dbReference type="ChEBI" id="CHEBI:57783"/>
    </ligand>
</feature>
<reference key="1">
    <citation type="journal article" date="2002" name="Proc. Natl. Acad. Sci. U.S.A.">
        <title>Genome sequence of a serotype M3 strain of group A Streptococcus: phage-encoded toxins, the high-virulence phenotype, and clone emergence.</title>
        <authorList>
            <person name="Beres S.B."/>
            <person name="Sylva G.L."/>
            <person name="Barbian K.D."/>
            <person name="Lei B."/>
            <person name="Hoff J.S."/>
            <person name="Mammarella N.D."/>
            <person name="Liu M.-Y."/>
            <person name="Smoot J.C."/>
            <person name="Porcella S.F."/>
            <person name="Parkins L.D."/>
            <person name="Campbell D.S."/>
            <person name="Smith T.M."/>
            <person name="McCormick J.K."/>
            <person name="Leung D.Y.M."/>
            <person name="Schlievert P.M."/>
            <person name="Musser J.M."/>
        </authorList>
    </citation>
    <scope>NUCLEOTIDE SEQUENCE [LARGE SCALE GENOMIC DNA]</scope>
    <source>
        <strain>ATCC BAA-595 / MGAS315</strain>
    </source>
</reference>
<dbReference type="EC" id="1.1.1.94" evidence="1"/>
<dbReference type="EMBL" id="AE014074">
    <property type="protein sequence ID" value="AAM78768.1"/>
    <property type="molecule type" value="Genomic_DNA"/>
</dbReference>
<dbReference type="RefSeq" id="WP_002986123.1">
    <property type="nucleotide sequence ID" value="NC_004070.1"/>
</dbReference>
<dbReference type="SMR" id="P0DB22"/>
<dbReference type="KEGG" id="spg:SpyM3_0161"/>
<dbReference type="HOGENOM" id="CLU_033449_0_2_9"/>
<dbReference type="UniPathway" id="UPA00940"/>
<dbReference type="Proteomes" id="UP000000564">
    <property type="component" value="Chromosome"/>
</dbReference>
<dbReference type="GO" id="GO:0005829">
    <property type="term" value="C:cytosol"/>
    <property type="evidence" value="ECO:0007669"/>
    <property type="project" value="TreeGrafter"/>
</dbReference>
<dbReference type="GO" id="GO:0047952">
    <property type="term" value="F:glycerol-3-phosphate dehydrogenase [NAD(P)+] activity"/>
    <property type="evidence" value="ECO:0007669"/>
    <property type="project" value="UniProtKB-UniRule"/>
</dbReference>
<dbReference type="GO" id="GO:0051287">
    <property type="term" value="F:NAD binding"/>
    <property type="evidence" value="ECO:0007669"/>
    <property type="project" value="InterPro"/>
</dbReference>
<dbReference type="GO" id="GO:0005975">
    <property type="term" value="P:carbohydrate metabolic process"/>
    <property type="evidence" value="ECO:0007669"/>
    <property type="project" value="InterPro"/>
</dbReference>
<dbReference type="GO" id="GO:0046167">
    <property type="term" value="P:glycerol-3-phosphate biosynthetic process"/>
    <property type="evidence" value="ECO:0007669"/>
    <property type="project" value="UniProtKB-UniRule"/>
</dbReference>
<dbReference type="GO" id="GO:0046168">
    <property type="term" value="P:glycerol-3-phosphate catabolic process"/>
    <property type="evidence" value="ECO:0007669"/>
    <property type="project" value="InterPro"/>
</dbReference>
<dbReference type="GO" id="GO:0006650">
    <property type="term" value="P:glycerophospholipid metabolic process"/>
    <property type="evidence" value="ECO:0007669"/>
    <property type="project" value="UniProtKB-UniRule"/>
</dbReference>
<dbReference type="GO" id="GO:0008654">
    <property type="term" value="P:phospholipid biosynthetic process"/>
    <property type="evidence" value="ECO:0007669"/>
    <property type="project" value="UniProtKB-KW"/>
</dbReference>
<dbReference type="FunFam" id="1.10.1040.10:FF:000001">
    <property type="entry name" value="Glycerol-3-phosphate dehydrogenase [NAD(P)+]"/>
    <property type="match status" value="1"/>
</dbReference>
<dbReference type="FunFam" id="3.40.50.720:FF:000019">
    <property type="entry name" value="Glycerol-3-phosphate dehydrogenase [NAD(P)+]"/>
    <property type="match status" value="1"/>
</dbReference>
<dbReference type="Gene3D" id="1.10.1040.10">
    <property type="entry name" value="N-(1-d-carboxylethyl)-l-norvaline Dehydrogenase, domain 2"/>
    <property type="match status" value="1"/>
</dbReference>
<dbReference type="Gene3D" id="3.40.50.720">
    <property type="entry name" value="NAD(P)-binding Rossmann-like Domain"/>
    <property type="match status" value="1"/>
</dbReference>
<dbReference type="HAMAP" id="MF_00394">
    <property type="entry name" value="NAD_Glyc3P_dehydrog"/>
    <property type="match status" value="1"/>
</dbReference>
<dbReference type="InterPro" id="IPR008927">
    <property type="entry name" value="6-PGluconate_DH-like_C_sf"/>
</dbReference>
<dbReference type="InterPro" id="IPR013328">
    <property type="entry name" value="6PGD_dom2"/>
</dbReference>
<dbReference type="InterPro" id="IPR006168">
    <property type="entry name" value="G3P_DH_NAD-dep"/>
</dbReference>
<dbReference type="InterPro" id="IPR006109">
    <property type="entry name" value="G3P_DH_NAD-dep_C"/>
</dbReference>
<dbReference type="InterPro" id="IPR011128">
    <property type="entry name" value="G3P_DH_NAD-dep_N"/>
</dbReference>
<dbReference type="InterPro" id="IPR036291">
    <property type="entry name" value="NAD(P)-bd_dom_sf"/>
</dbReference>
<dbReference type="NCBIfam" id="NF000940">
    <property type="entry name" value="PRK00094.1-2"/>
    <property type="match status" value="1"/>
</dbReference>
<dbReference type="NCBIfam" id="NF000941">
    <property type="entry name" value="PRK00094.1-3"/>
    <property type="match status" value="1"/>
</dbReference>
<dbReference type="NCBIfam" id="NF000942">
    <property type="entry name" value="PRK00094.1-4"/>
    <property type="match status" value="1"/>
</dbReference>
<dbReference type="PANTHER" id="PTHR11728">
    <property type="entry name" value="GLYCEROL-3-PHOSPHATE DEHYDROGENASE"/>
    <property type="match status" value="1"/>
</dbReference>
<dbReference type="PANTHER" id="PTHR11728:SF1">
    <property type="entry name" value="GLYCEROL-3-PHOSPHATE DEHYDROGENASE [NAD(+)] 2, CHLOROPLASTIC"/>
    <property type="match status" value="1"/>
</dbReference>
<dbReference type="Pfam" id="PF07479">
    <property type="entry name" value="NAD_Gly3P_dh_C"/>
    <property type="match status" value="1"/>
</dbReference>
<dbReference type="Pfam" id="PF01210">
    <property type="entry name" value="NAD_Gly3P_dh_N"/>
    <property type="match status" value="1"/>
</dbReference>
<dbReference type="PIRSF" id="PIRSF000114">
    <property type="entry name" value="Glycerol-3-P_dh"/>
    <property type="match status" value="1"/>
</dbReference>
<dbReference type="PRINTS" id="PR00077">
    <property type="entry name" value="GPDHDRGNASE"/>
</dbReference>
<dbReference type="SUPFAM" id="SSF48179">
    <property type="entry name" value="6-phosphogluconate dehydrogenase C-terminal domain-like"/>
    <property type="match status" value="1"/>
</dbReference>
<dbReference type="SUPFAM" id="SSF51735">
    <property type="entry name" value="NAD(P)-binding Rossmann-fold domains"/>
    <property type="match status" value="1"/>
</dbReference>
<dbReference type="PROSITE" id="PS00957">
    <property type="entry name" value="NAD_G3PDH"/>
    <property type="match status" value="1"/>
</dbReference>
<sequence>MTKQKVAILGPGSWGTALSQVLNDNGHDVRLWGNIPDQIEEINTKHTNRHYFKDIVLDKNITATLDLGQALSDVDAVLFVVPTKVTRLVARQVAAILDHKVVVMHASKGLEPETHERLSTILEEEIPAHFRSEVVVVSGPSHAEETIVRDITLITAASKDIEAAKYVQSLFSNHYFRLYTNTDVIGVETAGALKNIIAVGAGALHGLGYGDNAKAAVITRGLAEITRLGVKLGADPLTYSGLSGVGDLIVTGTSVHSRNWRAGAALGRGEKLEDIERNMGMVIEGIATTKVAYEIAQDLGVYMPITTAIYKSIYEGADIKESILGMMSNEFRSENEWH</sequence>
<proteinExistence type="inferred from homology"/>
<keyword id="KW-0963">Cytoplasm</keyword>
<keyword id="KW-0444">Lipid biosynthesis</keyword>
<keyword id="KW-0443">Lipid metabolism</keyword>
<keyword id="KW-0520">NAD</keyword>
<keyword id="KW-0521">NADP</keyword>
<keyword id="KW-0547">Nucleotide-binding</keyword>
<keyword id="KW-0560">Oxidoreductase</keyword>
<keyword id="KW-0594">Phospholipid biosynthesis</keyword>
<keyword id="KW-1208">Phospholipid metabolism</keyword>
<organism>
    <name type="scientific">Streptococcus pyogenes serotype M3 (strain ATCC BAA-595 / MGAS315)</name>
    <dbReference type="NCBI Taxonomy" id="198466"/>
    <lineage>
        <taxon>Bacteria</taxon>
        <taxon>Bacillati</taxon>
        <taxon>Bacillota</taxon>
        <taxon>Bacilli</taxon>
        <taxon>Lactobacillales</taxon>
        <taxon>Streptococcaceae</taxon>
        <taxon>Streptococcus</taxon>
    </lineage>
</organism>
<name>GPDA_STRP3</name>
<protein>
    <recommendedName>
        <fullName evidence="1">Glycerol-3-phosphate dehydrogenase [NAD(P)+]</fullName>
        <ecNumber evidence="1">1.1.1.94</ecNumber>
    </recommendedName>
    <alternativeName>
        <fullName evidence="1">NAD(P)(+)-dependent glycerol-3-phosphate dehydrogenase</fullName>
    </alternativeName>
    <alternativeName>
        <fullName evidence="1">NAD(P)H-dependent dihydroxyacetone-phosphate reductase</fullName>
    </alternativeName>
</protein>
<comment type="function">
    <text evidence="1">Catalyzes the reduction of the glycolytic intermediate dihydroxyacetone phosphate (DHAP) to sn-glycerol 3-phosphate (G3P), the key precursor for phospholipid synthesis.</text>
</comment>
<comment type="catalytic activity">
    <reaction evidence="1">
        <text>sn-glycerol 3-phosphate + NAD(+) = dihydroxyacetone phosphate + NADH + H(+)</text>
        <dbReference type="Rhea" id="RHEA:11092"/>
        <dbReference type="ChEBI" id="CHEBI:15378"/>
        <dbReference type="ChEBI" id="CHEBI:57540"/>
        <dbReference type="ChEBI" id="CHEBI:57597"/>
        <dbReference type="ChEBI" id="CHEBI:57642"/>
        <dbReference type="ChEBI" id="CHEBI:57945"/>
        <dbReference type="EC" id="1.1.1.94"/>
    </reaction>
    <physiologicalReaction direction="right-to-left" evidence="1">
        <dbReference type="Rhea" id="RHEA:11094"/>
    </physiologicalReaction>
</comment>
<comment type="catalytic activity">
    <reaction evidence="1">
        <text>sn-glycerol 3-phosphate + NADP(+) = dihydroxyacetone phosphate + NADPH + H(+)</text>
        <dbReference type="Rhea" id="RHEA:11096"/>
        <dbReference type="ChEBI" id="CHEBI:15378"/>
        <dbReference type="ChEBI" id="CHEBI:57597"/>
        <dbReference type="ChEBI" id="CHEBI:57642"/>
        <dbReference type="ChEBI" id="CHEBI:57783"/>
        <dbReference type="ChEBI" id="CHEBI:58349"/>
        <dbReference type="EC" id="1.1.1.94"/>
    </reaction>
    <physiologicalReaction direction="right-to-left" evidence="1">
        <dbReference type="Rhea" id="RHEA:11098"/>
    </physiologicalReaction>
</comment>
<comment type="pathway">
    <text evidence="1">Membrane lipid metabolism; glycerophospholipid metabolism.</text>
</comment>
<comment type="subcellular location">
    <subcellularLocation>
        <location evidence="1">Cytoplasm</location>
    </subcellularLocation>
</comment>
<comment type="similarity">
    <text evidence="1">Belongs to the NAD-dependent glycerol-3-phosphate dehydrogenase family.</text>
</comment>
<accession>P0DB22</accession>
<accession>P58143</accession>
<accession>P68888</accession>
<accession>P82550</accession>
<gene>
    <name evidence="1" type="primary">gpsA</name>
    <name type="ordered locus">SpyM3_0161</name>
</gene>